<reference key="1">
    <citation type="journal article" date="2015" name="PLoS ONE">
        <title>Cysteine-Rich Atrial Secretory Protein from the Snail Achatina achatina: Purification and Structural Characterization.</title>
        <authorList>
            <person name="Shabelnikov S."/>
            <person name="Kiselev A."/>
        </authorList>
    </citation>
    <scope>NUCLEOTIDE SEQUENCE [MRNA]</scope>
    <scope>PROTEIN SEQUENCE OF 27-46 AND 48-64</scope>
    <scope>SUBCELLULAR LOCATION</scope>
    <scope>TISSUE SPECIFICITY</scope>
    <scope>DEVELOPMENTAL STAGE</scope>
    <scope>GLYCOSYLATION AT ASN-74</scope>
    <scope>DISULFIDE BONDS</scope>
    <scope>MASS SPECTROMETRY</scope>
    <source>
        <tissue evidence="3">Heart atrium</tissue>
    </source>
</reference>
<organism evidence="3">
    <name type="scientific">Achatina achatina</name>
    <name type="common">Giant Ghana snail</name>
    <dbReference type="NCBI Taxonomy" id="1442373"/>
    <lineage>
        <taxon>Eukaryota</taxon>
        <taxon>Metazoa</taxon>
        <taxon>Spiralia</taxon>
        <taxon>Lophotrochozoa</taxon>
        <taxon>Mollusca</taxon>
        <taxon>Gastropoda</taxon>
        <taxon>Heterobranchia</taxon>
        <taxon>Euthyneura</taxon>
        <taxon>Panpulmonata</taxon>
        <taxon>Eupulmonata</taxon>
        <taxon>Stylommatophora</taxon>
        <taxon>Helicina</taxon>
        <taxon>Achatinoidea</taxon>
        <taxon>Achatinidae</taxon>
        <taxon>Achatina</taxon>
    </lineage>
</organism>
<proteinExistence type="evidence at protein level"/>
<accession>W1I921</accession>
<accession>C0HJG1</accession>
<keyword id="KW-0903">Direct protein sequencing</keyword>
<keyword id="KW-1015">Disulfide bond</keyword>
<keyword id="KW-0325">Glycoprotein</keyword>
<keyword id="KW-0964">Secreted</keyword>
<keyword id="KW-0732">Signal</keyword>
<sequence>MATFQAHFFAAVMCVGVLGLSKLCGADSCEYPDCVFTGLPRSSGVERYILLLNIIEVPDDIQQQCDILIQRAHNCTSQRTGCSRRVEESYDRRFYDGAYVMYLLDLGVYVCGHLSQLLDLKNCFTPKLQESVQSCINAAYNIQCLLDQYDQKNNCPPNTDDYFHTLVNNWLANNPYLGTGADRD</sequence>
<protein>
    <recommendedName>
        <fullName evidence="3">Cysteine-rich atrial secretory protein</fullName>
    </recommendedName>
</protein>
<feature type="signal peptide" evidence="2">
    <location>
        <begin position="1"/>
        <end position="26"/>
    </location>
</feature>
<feature type="chain" id="PRO_0000429763" description="Cysteine-rich atrial secretory protein" evidence="2">
    <location>
        <begin position="27"/>
        <end position="184"/>
    </location>
</feature>
<feature type="glycosylation site" description="N-linked (GlcNAc...) asparagine" evidence="1">
    <location>
        <position position="74"/>
    </location>
</feature>
<feature type="disulfide bond" evidence="2">
    <location>
        <begin position="29"/>
        <end position="34"/>
    </location>
</feature>
<feature type="disulfide bond" evidence="2">
    <location>
        <begin position="65"/>
        <end position="111"/>
    </location>
</feature>
<feature type="disulfide bond" evidence="2">
    <location>
        <begin position="75"/>
        <end position="82"/>
    </location>
</feature>
<feature type="disulfide bond" evidence="2">
    <location>
        <begin position="123"/>
        <end position="155"/>
    </location>
</feature>
<feature type="disulfide bond" evidence="2">
    <location>
        <begin position="135"/>
        <end position="144"/>
    </location>
</feature>
<gene>
    <name evidence="4" type="primary">crasp</name>
</gene>
<dbReference type="EMBL" id="HG798329">
    <property type="protein sequence ID" value="CDL67813.1"/>
    <property type="molecule type" value="mRNA"/>
</dbReference>
<dbReference type="GlyCosmos" id="W1I921">
    <property type="glycosylation" value="1 site, No reported glycans"/>
</dbReference>
<dbReference type="GO" id="GO:0005576">
    <property type="term" value="C:extracellular region"/>
    <property type="evidence" value="ECO:0007669"/>
    <property type="project" value="UniProtKB-SubCell"/>
</dbReference>
<name>CRAS_ACHAC</name>
<comment type="subcellular location">
    <subcellularLocation>
        <location evidence="2">Secreted</location>
    </subcellularLocation>
    <text evidence="2">Stored in secretory granules of atrial granular cells and released into hemolymph after electrostimulation of the heart nerve.</text>
</comment>
<comment type="tissue specificity">
    <text evidence="2">Highly expressed in atrium. Moderately expressed in the pericardium, pulmonary vein, nephridium, arteria anterior, ovotestis and connective tissue. Low expression found in intestine, lung plexus, diaphragm, subesophageal ganglion, ventricle and digestive gland. Very low expression found in columellar retractor, pedal nerves and cerebral ganglion. Not expressed in hemocytes.</text>
</comment>
<comment type="developmental stage">
    <text evidence="2">Expressed in newborn snails as well as adults.</text>
</comment>
<comment type="PTM">
    <text evidence="2">N-glycosylated.</text>
</comment>
<comment type="mass spectrometry">
    <text>Non-glycosylated.</text>
</comment>
<evidence type="ECO:0000255" key="1">
    <source>
        <dbReference type="PROSITE-ProRule" id="PRU00498"/>
    </source>
</evidence>
<evidence type="ECO:0000269" key="2">
    <source>
    </source>
</evidence>
<evidence type="ECO:0000303" key="3">
    <source>
    </source>
</evidence>
<evidence type="ECO:0000312" key="4">
    <source>
        <dbReference type="EMBL" id="CDL67813.1"/>
    </source>
</evidence>